<reference key="1">
    <citation type="journal article" date="2003" name="Proc. Natl. Acad. Sci. U.S.A.">
        <title>Complete genome sequence and analysis of Wolinella succinogenes.</title>
        <authorList>
            <person name="Baar C."/>
            <person name="Eppinger M."/>
            <person name="Raddatz G."/>
            <person name="Simon J."/>
            <person name="Lanz C."/>
            <person name="Klimmek O."/>
            <person name="Nandakumar R."/>
            <person name="Gross R."/>
            <person name="Rosinus A."/>
            <person name="Keller H."/>
            <person name="Jagtap P."/>
            <person name="Linke B."/>
            <person name="Meyer F."/>
            <person name="Lederer H."/>
            <person name="Schuster S.C."/>
        </authorList>
    </citation>
    <scope>NUCLEOTIDE SEQUENCE [LARGE SCALE GENOMIC DNA]</scope>
    <source>
        <strain>ATCC 29543 / DSM 1740 / CCUG 13145 / JCM 31913 / LMG 7466 / NCTC 11488 / FDC 602W</strain>
    </source>
</reference>
<reference key="2">
    <citation type="journal article" date="2009" name="Mol. Microbiol.">
        <title>Production, characterization and determination of the real catalytic properties of the putative 'succinate dehydrogenase' from Wolinella succinogenes.</title>
        <authorList>
            <person name="Juhnke H.D."/>
            <person name="Hiltscher H."/>
            <person name="Nasiri H.R."/>
            <person name="Schwalbe H."/>
            <person name="Lancaster C.R."/>
        </authorList>
    </citation>
    <scope>FUNCTION</scope>
    <scope>CATALYTIC ACTIVITY</scope>
    <scope>COFACTOR</scope>
    <scope>SUBCELLULAR LOCATION</scope>
    <scope>SUBUNIT</scope>
    <scope>MUTAGENESIS OF 7-ARG-ARG-8 AND ALA-86</scope>
    <scope>IDENTIFICATION BY MASS SPECTROMETRY</scope>
    <source>
        <strain>ATCC 29543 / DSM 1740 / CCUG 13145 / JCM 31913 / LMG 7466 / NCTC 11488 / FDC 602W</strain>
    </source>
</reference>
<feature type="signal peptide" description="Tat-type signal" evidence="2">
    <location>
        <begin position="1"/>
        <end position="33"/>
    </location>
</feature>
<feature type="chain" id="PRO_0000437540" description="8-methylmenaquinol:fumarate reductase flavoprotein subunit">
    <location>
        <begin position="34"/>
        <end position="613"/>
    </location>
</feature>
<feature type="active site" description="Proton acceptor" evidence="1">
    <location>
        <position position="319"/>
    </location>
</feature>
<feature type="binding site" evidence="1">
    <location>
        <begin position="53"/>
        <end position="58"/>
    </location>
    <ligand>
        <name>FAD</name>
        <dbReference type="ChEBI" id="CHEBI:57692"/>
    </ligand>
</feature>
<feature type="binding site" evidence="1">
    <location>
        <begin position="78"/>
        <end position="93"/>
    </location>
    <ligand>
        <name>FAD</name>
        <dbReference type="ChEBI" id="CHEBI:57692"/>
    </ligand>
</feature>
<feature type="binding site" evidence="1">
    <location>
        <position position="255"/>
    </location>
    <ligand>
        <name>FAD</name>
        <dbReference type="ChEBI" id="CHEBI:57692"/>
    </ligand>
</feature>
<feature type="binding site" evidence="1">
    <location>
        <position position="276"/>
    </location>
    <ligand>
        <name>substrate</name>
    </ligand>
</feature>
<feature type="binding site" evidence="1">
    <location>
        <position position="288"/>
    </location>
    <ligand>
        <name>substrate</name>
    </ligand>
</feature>
<feature type="binding site" evidence="1">
    <location>
        <position position="387"/>
    </location>
    <ligand>
        <name>substrate</name>
    </ligand>
</feature>
<feature type="binding site" evidence="1">
    <location>
        <position position="413"/>
    </location>
    <ligand>
        <name>FAD</name>
        <dbReference type="ChEBI" id="CHEBI:57692"/>
    </ligand>
</feature>
<feature type="binding site" evidence="1">
    <location>
        <position position="424"/>
    </location>
    <ligand>
        <name>substrate</name>
    </ligand>
</feature>
<feature type="binding site" evidence="1">
    <location>
        <begin position="429"/>
        <end position="430"/>
    </location>
    <ligand>
        <name>FAD</name>
        <dbReference type="ChEBI" id="CHEBI:57692"/>
    </ligand>
</feature>
<feature type="mutagenesis site" description="Highly decreases MFR activity in the periplasm due to the disruption of the signal peptide." evidence="3">
    <original>RR</original>
    <variation>QQ</variation>
    <location>
        <begin position="7"/>
        <end position="8"/>
    </location>
</feature>
<feature type="mutagenesis site" description="Leads to covalent attachment of FAD to the enzyme. Is still not able to catalyze succinate oxidation." evidence="3">
    <original>A</original>
    <variation>H</variation>
    <location>
        <position position="86"/>
    </location>
</feature>
<accession>Q7M827</accession>
<protein>
    <recommendedName>
        <fullName evidence="4">8-methylmenaquinol:fumarate reductase flavoprotein subunit</fullName>
        <shortName evidence="4">MFR flavoprotein subunit</shortName>
        <ecNumber evidence="3">1.3.5.-</ecNumber>
    </recommendedName>
</protein>
<gene>
    <name evidence="4 7" type="primary">sdhA</name>
    <name evidence="7" type="ordered locus">WS1920</name>
</gene>
<name>MFRA_WOLSU</name>
<dbReference type="EC" id="1.3.5.-" evidence="3"/>
<dbReference type="EMBL" id="BX571662">
    <property type="protein sequence ID" value="CAE10929.1"/>
    <property type="molecule type" value="Genomic_DNA"/>
</dbReference>
<dbReference type="RefSeq" id="WP_011139712.1">
    <property type="nucleotide sequence ID" value="NC_005090.1"/>
</dbReference>
<dbReference type="SMR" id="Q7M827"/>
<dbReference type="STRING" id="273121.WS1920"/>
<dbReference type="KEGG" id="wsu:WS1920"/>
<dbReference type="eggNOG" id="COG1053">
    <property type="taxonomic scope" value="Bacteria"/>
</dbReference>
<dbReference type="HOGENOM" id="CLU_014312_6_2_7"/>
<dbReference type="Proteomes" id="UP000000422">
    <property type="component" value="Chromosome"/>
</dbReference>
<dbReference type="GO" id="GO:0042597">
    <property type="term" value="C:periplasmic space"/>
    <property type="evidence" value="ECO:0007669"/>
    <property type="project" value="UniProtKB-SubCell"/>
</dbReference>
<dbReference type="GO" id="GO:0005886">
    <property type="term" value="C:plasma membrane"/>
    <property type="evidence" value="ECO:0007669"/>
    <property type="project" value="UniProtKB-SubCell"/>
</dbReference>
<dbReference type="GO" id="GO:0009055">
    <property type="term" value="F:electron transfer activity"/>
    <property type="evidence" value="ECO:0007669"/>
    <property type="project" value="TreeGrafter"/>
</dbReference>
<dbReference type="GO" id="GO:0050660">
    <property type="term" value="F:flavin adenine dinucleotide binding"/>
    <property type="evidence" value="ECO:0007669"/>
    <property type="project" value="InterPro"/>
</dbReference>
<dbReference type="GO" id="GO:0000104">
    <property type="term" value="F:succinate dehydrogenase activity"/>
    <property type="evidence" value="ECO:0007669"/>
    <property type="project" value="TreeGrafter"/>
</dbReference>
<dbReference type="GO" id="GO:0009061">
    <property type="term" value="P:anaerobic respiration"/>
    <property type="evidence" value="ECO:0007669"/>
    <property type="project" value="TreeGrafter"/>
</dbReference>
<dbReference type="GO" id="GO:0022900">
    <property type="term" value="P:electron transport chain"/>
    <property type="evidence" value="ECO:0007669"/>
    <property type="project" value="InterPro"/>
</dbReference>
<dbReference type="FunFam" id="3.90.700.10:FF:000005">
    <property type="entry name" value="Succinate dehydrogenase flavoprotein subunit"/>
    <property type="match status" value="1"/>
</dbReference>
<dbReference type="Gene3D" id="3.50.50.60">
    <property type="entry name" value="FAD/NAD(P)-binding domain"/>
    <property type="match status" value="1"/>
</dbReference>
<dbReference type="Gene3D" id="1.20.58.100">
    <property type="entry name" value="Fumarate reductase/succinate dehydrogenase flavoprotein-like, C-terminal domain"/>
    <property type="match status" value="1"/>
</dbReference>
<dbReference type="Gene3D" id="4.10.80.40">
    <property type="entry name" value="succinate dehydrogenase protein domain"/>
    <property type="match status" value="1"/>
</dbReference>
<dbReference type="Gene3D" id="3.90.700.10">
    <property type="entry name" value="Succinate dehydrogenase/fumarate reductase flavoprotein, catalytic domain"/>
    <property type="match status" value="1"/>
</dbReference>
<dbReference type="InterPro" id="IPR003953">
    <property type="entry name" value="FAD-dep_OxRdtase_2_FAD-bd"/>
</dbReference>
<dbReference type="InterPro" id="IPR053593">
    <property type="entry name" value="FAD-oxidoreductase_2/FRD/SDH"/>
</dbReference>
<dbReference type="InterPro" id="IPR036188">
    <property type="entry name" value="FAD/NAD-bd_sf"/>
</dbReference>
<dbReference type="InterPro" id="IPR037099">
    <property type="entry name" value="Fum_R/Succ_DH_flav-like_C_sf"/>
</dbReference>
<dbReference type="InterPro" id="IPR015939">
    <property type="entry name" value="Fum_Rdtase/Succ_DH_flav-like_C"/>
</dbReference>
<dbReference type="InterPro" id="IPR030664">
    <property type="entry name" value="SdhA/FrdA/AprA"/>
</dbReference>
<dbReference type="InterPro" id="IPR027477">
    <property type="entry name" value="Succ_DH/fumarate_Rdtase_cat_sf"/>
</dbReference>
<dbReference type="InterPro" id="IPR014006">
    <property type="entry name" value="Succ_Dhase_FrdA_Gneg"/>
</dbReference>
<dbReference type="InterPro" id="IPR006311">
    <property type="entry name" value="TAT_signal"/>
</dbReference>
<dbReference type="NCBIfam" id="NF042982">
    <property type="entry name" value="MFR_Fp_SdhA"/>
    <property type="match status" value="1"/>
</dbReference>
<dbReference type="NCBIfam" id="TIGR01812">
    <property type="entry name" value="sdhA_frdA_Gneg"/>
    <property type="match status" value="1"/>
</dbReference>
<dbReference type="PANTHER" id="PTHR11632">
    <property type="entry name" value="SUCCINATE DEHYDROGENASE 2 FLAVOPROTEIN SUBUNIT"/>
    <property type="match status" value="1"/>
</dbReference>
<dbReference type="PANTHER" id="PTHR11632:SF51">
    <property type="entry name" value="SUCCINATE DEHYDROGENASE [UBIQUINONE] FLAVOPROTEIN SUBUNIT, MITOCHONDRIAL"/>
    <property type="match status" value="1"/>
</dbReference>
<dbReference type="Pfam" id="PF00890">
    <property type="entry name" value="FAD_binding_2"/>
    <property type="match status" value="1"/>
</dbReference>
<dbReference type="Pfam" id="PF02910">
    <property type="entry name" value="Succ_DH_flav_C"/>
    <property type="match status" value="1"/>
</dbReference>
<dbReference type="PIRSF" id="PIRSF000171">
    <property type="entry name" value="SDHA_APRA_LASPO"/>
    <property type="match status" value="1"/>
</dbReference>
<dbReference type="PRINTS" id="PR00368">
    <property type="entry name" value="FADPNR"/>
</dbReference>
<dbReference type="SUPFAM" id="SSF51905">
    <property type="entry name" value="FAD/NAD(P)-binding domain"/>
    <property type="match status" value="1"/>
</dbReference>
<dbReference type="SUPFAM" id="SSF46977">
    <property type="entry name" value="Succinate dehydrogenase/fumarate reductase flavoprotein C-terminal domain"/>
    <property type="match status" value="1"/>
</dbReference>
<dbReference type="SUPFAM" id="SSF56425">
    <property type="entry name" value="Succinate dehydrogenase/fumarate reductase flavoprotein, catalytic domain"/>
    <property type="match status" value="1"/>
</dbReference>
<dbReference type="PROSITE" id="PS51318">
    <property type="entry name" value="TAT"/>
    <property type="match status" value="1"/>
</dbReference>
<sequence length="613" mass="66517">MSEQFTRREFLQSACITMGALAVSTSGVDRAFASSSLPINTSGIPSCDVLIIGSGAAGLRAAVAARKKDPSLNVIVVSKVMPTRSATTMAEGGINGVIDFSEGDSFALHAYDTVKGGDFLVDQDTAMKFAEHAGEAIHELDYIGMPFSRDKNGKVDKRYAGGASKIRCNFSADKTGHILTHTCLDDALKNGVKFLMDHQLLDIGVDNGRCEGVVLRDIRTGTIAPVRAKSVVLATGGYTRVFWNRTSTPYIATGDGAASAMRAGVAFKDPEMLQFHPTGVCHGGVLITEAARGEGGILLNNQGERFMKNYAKKMELAPRDIVSRSIETEIREGRAFGKGMEAYVLLDVTHLGKEKIMRNLPQIRHIGLLFENMDLVEKPIAIRPTAHYSMGGIDVMGLESMSTAIPGLFAAGEAACVSIHGANRLGGNSLCDTVVTGKIAGTNAASFASSAGFGSGTHLHDLTLKWMSRFKEVANGKGEVNEMYAIREELGAVNWDNMGVFRTESRLVALEDKHNELQARYDALRIPNTNPVFNTAFTEYVELGNILLASRAARMGAEARKESRGSHYREDYIKRDDANFLKHSMVTMDSNGKLHLGWKDVVVTQFKIEERKY</sequence>
<comment type="function">
    <text evidence="3">Flavoprotein subunit of 8-methylmenaquinol:fumarate reductase (MFR), that catalyzes the reduction of fumarate using 8-methylmenaquinol-6 as electron donor. The complex shows no succinate oxidation activity. Is involved in anaerobic metabolism. SdhA contains the dicarboxylate reduction site.</text>
</comment>
<comment type="catalytic activity">
    <reaction evidence="3">
        <text>8-methylmenaquinone-6 + succinate = 8-methylmenaquinol-6 + fumarate</text>
        <dbReference type="Rhea" id="RHEA:51848"/>
        <dbReference type="ChEBI" id="CHEBI:29806"/>
        <dbReference type="ChEBI" id="CHEBI:30031"/>
        <dbReference type="ChEBI" id="CHEBI:134356"/>
        <dbReference type="ChEBI" id="CHEBI:134357"/>
    </reaction>
</comment>
<comment type="cofactor">
    <cofactor evidence="6">
        <name>FAD</name>
        <dbReference type="ChEBI" id="CHEBI:57692"/>
    </cofactor>
</comment>
<comment type="subunit">
    <text evidence="3">The MFR complex is composed of three subunits: a flavoprotein (SdhA), an iron-sulfur protein (SdhB), and one hydrophobic anchor protein (SdhE).</text>
</comment>
<comment type="subcellular location">
    <subcellularLocation>
        <location evidence="3">Periplasm</location>
    </subcellularLocation>
    <subcellularLocation>
        <location evidence="3">Cell membrane</location>
        <topology evidence="6">Peripheral membrane protein</topology>
        <orientation evidence="3">Periplasmic side</orientation>
    </subcellularLocation>
    <text evidence="3">Is exported to the periplasm via the Tat pathway.</text>
</comment>
<comment type="PTM">
    <text evidence="2">Predicted to be exported by the Tat system. The position of the signal peptide cleavage has not been experimentally proven.</text>
</comment>
<comment type="similarity">
    <text evidence="5">Belongs to the FAD-dependent oxidoreductase 2 family. FRD/SDH subfamily.</text>
</comment>
<keyword id="KW-1003">Cell membrane</keyword>
<keyword id="KW-0249">Electron transport</keyword>
<keyword id="KW-0274">FAD</keyword>
<keyword id="KW-0285">Flavoprotein</keyword>
<keyword id="KW-0472">Membrane</keyword>
<keyword id="KW-0560">Oxidoreductase</keyword>
<keyword id="KW-0574">Periplasm</keyword>
<keyword id="KW-1185">Reference proteome</keyword>
<keyword id="KW-0732">Signal</keyword>
<keyword id="KW-0813">Transport</keyword>
<evidence type="ECO:0000250" key="1">
    <source>
        <dbReference type="UniProtKB" id="Q9YHT1"/>
    </source>
</evidence>
<evidence type="ECO:0000255" key="2">
    <source>
        <dbReference type="PROSITE-ProRule" id="PRU00648"/>
    </source>
</evidence>
<evidence type="ECO:0000269" key="3">
    <source>
    </source>
</evidence>
<evidence type="ECO:0000303" key="4">
    <source>
    </source>
</evidence>
<evidence type="ECO:0000305" key="5"/>
<evidence type="ECO:0000305" key="6">
    <source>
    </source>
</evidence>
<evidence type="ECO:0000312" key="7">
    <source>
        <dbReference type="EMBL" id="CAE10929.1"/>
    </source>
</evidence>
<proteinExistence type="evidence at protein level"/>
<organism>
    <name type="scientific">Wolinella succinogenes (strain ATCC 29543 / DSM 1740 / CCUG 13145 / JCM 31913 / LMG 7466 / NCTC 11488 / FDC 602W)</name>
    <name type="common">Vibrio succinogenes</name>
    <dbReference type="NCBI Taxonomy" id="273121"/>
    <lineage>
        <taxon>Bacteria</taxon>
        <taxon>Pseudomonadati</taxon>
        <taxon>Campylobacterota</taxon>
        <taxon>Epsilonproteobacteria</taxon>
        <taxon>Campylobacterales</taxon>
        <taxon>Helicobacteraceae</taxon>
        <taxon>Wolinella</taxon>
    </lineage>
</organism>